<evidence type="ECO:0000250" key="1"/>
<evidence type="ECO:0000250" key="2">
    <source>
        <dbReference type="UniProtKB" id="Q91X43"/>
    </source>
</evidence>
<evidence type="ECO:0000255" key="3">
    <source>
        <dbReference type="PROSITE-ProRule" id="PRU00192"/>
    </source>
</evidence>
<evidence type="ECO:0000256" key="4">
    <source>
        <dbReference type="SAM" id="MobiDB-lite"/>
    </source>
</evidence>
<evidence type="ECO:0000269" key="5">
    <source>
    </source>
</evidence>
<evidence type="ECO:0000269" key="6">
    <source>
    </source>
</evidence>
<evidence type="ECO:0000269" key="7">
    <source>
    </source>
</evidence>
<evidence type="ECO:0000303" key="8">
    <source>
    </source>
</evidence>
<evidence type="ECO:0000303" key="9">
    <source>
    </source>
</evidence>
<evidence type="ECO:0000305" key="10"/>
<evidence type="ECO:0007744" key="11">
    <source>
    </source>
</evidence>
<feature type="chain" id="PRO_0000318197" description="SH3 domain-containing protein 19">
    <location>
        <begin position="1"/>
        <end position="790"/>
    </location>
</feature>
<feature type="domain" description="SH3 1" evidence="3">
    <location>
        <begin position="415"/>
        <end position="477"/>
    </location>
</feature>
<feature type="domain" description="SH3 2" evidence="3">
    <location>
        <begin position="495"/>
        <end position="554"/>
    </location>
</feature>
<feature type="domain" description="SH3 3" evidence="3">
    <location>
        <begin position="571"/>
        <end position="630"/>
    </location>
</feature>
<feature type="domain" description="SH3 4" evidence="3">
    <location>
        <begin position="661"/>
        <end position="720"/>
    </location>
</feature>
<feature type="domain" description="SH3 5" evidence="3">
    <location>
        <begin position="730"/>
        <end position="789"/>
    </location>
</feature>
<feature type="region of interest" description="Disordered" evidence="4">
    <location>
        <begin position="21"/>
        <end position="196"/>
    </location>
</feature>
<feature type="region of interest" description="Disordered" evidence="4">
    <location>
        <begin position="241"/>
        <end position="374"/>
    </location>
</feature>
<feature type="region of interest" description="Interaction with SH3GL1" evidence="5">
    <location>
        <begin position="342"/>
        <end position="358"/>
    </location>
</feature>
<feature type="compositionally biased region" description="Polar residues" evidence="4">
    <location>
        <begin position="287"/>
        <end position="296"/>
    </location>
</feature>
<feature type="compositionally biased region" description="Pro residues" evidence="4">
    <location>
        <begin position="336"/>
        <end position="351"/>
    </location>
</feature>
<feature type="compositionally biased region" description="Polar residues" evidence="4">
    <location>
        <begin position="365"/>
        <end position="374"/>
    </location>
</feature>
<feature type="modified residue" description="Phosphoserine" evidence="2">
    <location>
        <position position="65"/>
    </location>
</feature>
<feature type="modified residue" description="Phosphoserine" evidence="2">
    <location>
        <position position="369"/>
    </location>
</feature>
<feature type="modified residue" description="Phosphoserine" evidence="11">
    <location>
        <position position="762"/>
    </location>
</feature>
<feature type="splice variant" id="VSP_031182" description="In isoform 4 and isoform 5." evidence="10">
    <location>
        <begin position="1"/>
        <end position="370"/>
    </location>
</feature>
<feature type="splice variant" id="VSP_031183" description="In isoform 3." evidence="9">
    <original>DPFQLPAKTEPIKERAVQPAPTRKPTVIRIPAKPGKC</original>
    <variation>G</variation>
    <location>
        <begin position="232"/>
        <end position="268"/>
    </location>
</feature>
<feature type="splice variant" id="VSP_031184" description="In isoform 2, isoform 3 and isoform 5." evidence="8 9">
    <location>
        <begin position="415"/>
        <end position="437"/>
    </location>
</feature>
<feature type="sequence conflict" description="In Ref. 2; CAI46052." evidence="10" ref="2">
    <original>M</original>
    <variation>V</variation>
    <location>
        <position position="1"/>
    </location>
</feature>
<feature type="sequence conflict" description="In Ref. 2; CAI46052." evidence="10" ref="2">
    <original>K</original>
    <variation>R</variation>
    <location>
        <position position="264"/>
    </location>
</feature>
<feature type="sequence conflict" description="In Ref. 2; CAI46052." evidence="10" ref="2">
    <original>K</original>
    <variation>E</variation>
    <location>
        <position position="267"/>
    </location>
</feature>
<protein>
    <recommendedName>
        <fullName>SH3 domain-containing protein 19</fullName>
    </recommendedName>
    <alternativeName>
        <fullName>ADAM-binding protein Eve-1</fullName>
    </alternativeName>
    <alternativeName>
        <fullName>EEN-binding protein</fullName>
        <shortName>EBP</shortName>
    </alternativeName>
</protein>
<reference key="1">
    <citation type="journal article" date="2004" name="Nat. Genet.">
        <title>Complete sequencing and characterization of 21,243 full-length human cDNAs.</title>
        <authorList>
            <person name="Ota T."/>
            <person name="Suzuki Y."/>
            <person name="Nishikawa T."/>
            <person name="Otsuki T."/>
            <person name="Sugiyama T."/>
            <person name="Irie R."/>
            <person name="Wakamatsu A."/>
            <person name="Hayashi K."/>
            <person name="Sato H."/>
            <person name="Nagai K."/>
            <person name="Kimura K."/>
            <person name="Makita H."/>
            <person name="Sekine M."/>
            <person name="Obayashi M."/>
            <person name="Nishi T."/>
            <person name="Shibahara T."/>
            <person name="Tanaka T."/>
            <person name="Ishii S."/>
            <person name="Yamamoto J."/>
            <person name="Saito K."/>
            <person name="Kawai Y."/>
            <person name="Isono Y."/>
            <person name="Nakamura Y."/>
            <person name="Nagahari K."/>
            <person name="Murakami K."/>
            <person name="Yasuda T."/>
            <person name="Iwayanagi T."/>
            <person name="Wagatsuma M."/>
            <person name="Shiratori A."/>
            <person name="Sudo H."/>
            <person name="Hosoiri T."/>
            <person name="Kaku Y."/>
            <person name="Kodaira H."/>
            <person name="Kondo H."/>
            <person name="Sugawara M."/>
            <person name="Takahashi M."/>
            <person name="Kanda K."/>
            <person name="Yokoi T."/>
            <person name="Furuya T."/>
            <person name="Kikkawa E."/>
            <person name="Omura Y."/>
            <person name="Abe K."/>
            <person name="Kamihara K."/>
            <person name="Katsuta N."/>
            <person name="Sato K."/>
            <person name="Tanikawa M."/>
            <person name="Yamazaki M."/>
            <person name="Ninomiya K."/>
            <person name="Ishibashi T."/>
            <person name="Yamashita H."/>
            <person name="Murakawa K."/>
            <person name="Fujimori K."/>
            <person name="Tanai H."/>
            <person name="Kimata M."/>
            <person name="Watanabe M."/>
            <person name="Hiraoka S."/>
            <person name="Chiba Y."/>
            <person name="Ishida S."/>
            <person name="Ono Y."/>
            <person name="Takiguchi S."/>
            <person name="Watanabe S."/>
            <person name="Yosida M."/>
            <person name="Hotuta T."/>
            <person name="Kusano J."/>
            <person name="Kanehori K."/>
            <person name="Takahashi-Fujii A."/>
            <person name="Hara H."/>
            <person name="Tanase T.-O."/>
            <person name="Nomura Y."/>
            <person name="Togiya S."/>
            <person name="Komai F."/>
            <person name="Hara R."/>
            <person name="Takeuchi K."/>
            <person name="Arita M."/>
            <person name="Imose N."/>
            <person name="Musashino K."/>
            <person name="Yuuki H."/>
            <person name="Oshima A."/>
            <person name="Sasaki N."/>
            <person name="Aotsuka S."/>
            <person name="Yoshikawa Y."/>
            <person name="Matsunawa H."/>
            <person name="Ichihara T."/>
            <person name="Shiohata N."/>
            <person name="Sano S."/>
            <person name="Moriya S."/>
            <person name="Momiyama H."/>
            <person name="Satoh N."/>
            <person name="Takami S."/>
            <person name="Terashima Y."/>
            <person name="Suzuki O."/>
            <person name="Nakagawa S."/>
            <person name="Senoh A."/>
            <person name="Mizoguchi H."/>
            <person name="Goto Y."/>
            <person name="Shimizu F."/>
            <person name="Wakebe H."/>
            <person name="Hishigaki H."/>
            <person name="Watanabe T."/>
            <person name="Sugiyama A."/>
            <person name="Takemoto M."/>
            <person name="Kawakami B."/>
            <person name="Yamazaki M."/>
            <person name="Watanabe K."/>
            <person name="Kumagai A."/>
            <person name="Itakura S."/>
            <person name="Fukuzumi Y."/>
            <person name="Fujimori Y."/>
            <person name="Komiyama M."/>
            <person name="Tashiro H."/>
            <person name="Tanigami A."/>
            <person name="Fujiwara T."/>
            <person name="Ono T."/>
            <person name="Yamada K."/>
            <person name="Fujii Y."/>
            <person name="Ozaki K."/>
            <person name="Hirao M."/>
            <person name="Ohmori Y."/>
            <person name="Kawabata A."/>
            <person name="Hikiji T."/>
            <person name="Kobatake N."/>
            <person name="Inagaki H."/>
            <person name="Ikema Y."/>
            <person name="Okamoto S."/>
            <person name="Okitani R."/>
            <person name="Kawakami T."/>
            <person name="Noguchi S."/>
            <person name="Itoh T."/>
            <person name="Shigeta K."/>
            <person name="Senba T."/>
            <person name="Matsumura K."/>
            <person name="Nakajima Y."/>
            <person name="Mizuno T."/>
            <person name="Morinaga M."/>
            <person name="Sasaki M."/>
            <person name="Togashi T."/>
            <person name="Oyama M."/>
            <person name="Hata H."/>
            <person name="Watanabe M."/>
            <person name="Komatsu T."/>
            <person name="Mizushima-Sugano J."/>
            <person name="Satoh T."/>
            <person name="Shirai Y."/>
            <person name="Takahashi Y."/>
            <person name="Nakagawa K."/>
            <person name="Okumura K."/>
            <person name="Nagase T."/>
            <person name="Nomura N."/>
            <person name="Kikuchi H."/>
            <person name="Masuho Y."/>
            <person name="Yamashita R."/>
            <person name="Nakai K."/>
            <person name="Yada T."/>
            <person name="Nakamura Y."/>
            <person name="Ohara O."/>
            <person name="Isogai T."/>
            <person name="Sugano S."/>
        </authorList>
    </citation>
    <scope>NUCLEOTIDE SEQUENCE [LARGE SCALE MRNA] (ISOFORM 2)</scope>
    <scope>NUCLEOTIDE SEQUENCE [LARGE SCALE MRNA] OF 275-790 (ISOFORM 1)</scope>
    <source>
        <tissue>Amygdala</tissue>
    </source>
</reference>
<reference key="2">
    <citation type="journal article" date="2007" name="BMC Genomics">
        <title>The full-ORF clone resource of the German cDNA consortium.</title>
        <authorList>
            <person name="Bechtel S."/>
            <person name="Rosenfelder H."/>
            <person name="Duda A."/>
            <person name="Schmidt C.P."/>
            <person name="Ernst U."/>
            <person name="Wellenreuther R."/>
            <person name="Mehrle A."/>
            <person name="Schuster C."/>
            <person name="Bahr A."/>
            <person name="Bloecker H."/>
            <person name="Heubner D."/>
            <person name="Hoerlein A."/>
            <person name="Michel G."/>
            <person name="Wedler H."/>
            <person name="Koehrer K."/>
            <person name="Ottenwaelder B."/>
            <person name="Poustka A."/>
            <person name="Wiemann S."/>
            <person name="Schupp I."/>
        </authorList>
    </citation>
    <scope>NUCLEOTIDE SEQUENCE [LARGE SCALE MRNA] (ISOFORM 1)</scope>
    <source>
        <tissue>Colon endothelium</tissue>
        <tissue>Testis</tissue>
    </source>
</reference>
<reference key="3">
    <citation type="journal article" date="2005" name="Nature">
        <title>Generation and annotation of the DNA sequences of human chromosomes 2 and 4.</title>
        <authorList>
            <person name="Hillier L.W."/>
            <person name="Graves T.A."/>
            <person name="Fulton R.S."/>
            <person name="Fulton L.A."/>
            <person name="Pepin K.H."/>
            <person name="Minx P."/>
            <person name="Wagner-McPherson C."/>
            <person name="Layman D."/>
            <person name="Wylie K."/>
            <person name="Sekhon M."/>
            <person name="Becker M.C."/>
            <person name="Fewell G.A."/>
            <person name="Delehaunty K.D."/>
            <person name="Miner T.L."/>
            <person name="Nash W.E."/>
            <person name="Kremitzki C."/>
            <person name="Oddy L."/>
            <person name="Du H."/>
            <person name="Sun H."/>
            <person name="Bradshaw-Cordum H."/>
            <person name="Ali J."/>
            <person name="Carter J."/>
            <person name="Cordes M."/>
            <person name="Harris A."/>
            <person name="Isak A."/>
            <person name="van Brunt A."/>
            <person name="Nguyen C."/>
            <person name="Du F."/>
            <person name="Courtney L."/>
            <person name="Kalicki J."/>
            <person name="Ozersky P."/>
            <person name="Abbott S."/>
            <person name="Armstrong J."/>
            <person name="Belter E.A."/>
            <person name="Caruso L."/>
            <person name="Cedroni M."/>
            <person name="Cotton M."/>
            <person name="Davidson T."/>
            <person name="Desai A."/>
            <person name="Elliott G."/>
            <person name="Erb T."/>
            <person name="Fronick C."/>
            <person name="Gaige T."/>
            <person name="Haakenson W."/>
            <person name="Haglund K."/>
            <person name="Holmes A."/>
            <person name="Harkins R."/>
            <person name="Kim K."/>
            <person name="Kruchowski S.S."/>
            <person name="Strong C.M."/>
            <person name="Grewal N."/>
            <person name="Goyea E."/>
            <person name="Hou S."/>
            <person name="Levy A."/>
            <person name="Martinka S."/>
            <person name="Mead K."/>
            <person name="McLellan M.D."/>
            <person name="Meyer R."/>
            <person name="Randall-Maher J."/>
            <person name="Tomlinson C."/>
            <person name="Dauphin-Kohlberg S."/>
            <person name="Kozlowicz-Reilly A."/>
            <person name="Shah N."/>
            <person name="Swearengen-Shahid S."/>
            <person name="Snider J."/>
            <person name="Strong J.T."/>
            <person name="Thompson J."/>
            <person name="Yoakum M."/>
            <person name="Leonard S."/>
            <person name="Pearman C."/>
            <person name="Trani L."/>
            <person name="Radionenko M."/>
            <person name="Waligorski J.E."/>
            <person name="Wang C."/>
            <person name="Rock S.M."/>
            <person name="Tin-Wollam A.-M."/>
            <person name="Maupin R."/>
            <person name="Latreille P."/>
            <person name="Wendl M.C."/>
            <person name="Yang S.-P."/>
            <person name="Pohl C."/>
            <person name="Wallis J.W."/>
            <person name="Spieth J."/>
            <person name="Bieri T.A."/>
            <person name="Berkowicz N."/>
            <person name="Nelson J.O."/>
            <person name="Osborne J."/>
            <person name="Ding L."/>
            <person name="Meyer R."/>
            <person name="Sabo A."/>
            <person name="Shotland Y."/>
            <person name="Sinha P."/>
            <person name="Wohldmann P.E."/>
            <person name="Cook L.L."/>
            <person name="Hickenbotham M.T."/>
            <person name="Eldred J."/>
            <person name="Williams D."/>
            <person name="Jones T.A."/>
            <person name="She X."/>
            <person name="Ciccarelli F.D."/>
            <person name="Izaurralde E."/>
            <person name="Taylor J."/>
            <person name="Schmutz J."/>
            <person name="Myers R.M."/>
            <person name="Cox D.R."/>
            <person name="Huang X."/>
            <person name="McPherson J.D."/>
            <person name="Mardis E.R."/>
            <person name="Clifton S.W."/>
            <person name="Warren W.C."/>
            <person name="Chinwalla A.T."/>
            <person name="Eddy S.R."/>
            <person name="Marra M.A."/>
            <person name="Ovcharenko I."/>
            <person name="Furey T.S."/>
            <person name="Miller W."/>
            <person name="Eichler E.E."/>
            <person name="Bork P."/>
            <person name="Suyama M."/>
            <person name="Torrents D."/>
            <person name="Waterston R.H."/>
            <person name="Wilson R.K."/>
        </authorList>
    </citation>
    <scope>NUCLEOTIDE SEQUENCE [LARGE SCALE GENOMIC DNA]</scope>
</reference>
<reference key="4">
    <citation type="submission" date="2005-09" db="EMBL/GenBank/DDBJ databases">
        <authorList>
            <person name="Mural R.J."/>
            <person name="Istrail S."/>
            <person name="Sutton G.G."/>
            <person name="Florea L."/>
            <person name="Halpern A.L."/>
            <person name="Mobarry C.M."/>
            <person name="Lippert R."/>
            <person name="Walenz B."/>
            <person name="Shatkay H."/>
            <person name="Dew I."/>
            <person name="Miller J.R."/>
            <person name="Flanigan M.J."/>
            <person name="Edwards N.J."/>
            <person name="Bolanos R."/>
            <person name="Fasulo D."/>
            <person name="Halldorsson B.V."/>
            <person name="Hannenhalli S."/>
            <person name="Turner R."/>
            <person name="Yooseph S."/>
            <person name="Lu F."/>
            <person name="Nusskern D.R."/>
            <person name="Shue B.C."/>
            <person name="Zheng X.H."/>
            <person name="Zhong F."/>
            <person name="Delcher A.L."/>
            <person name="Huson D.H."/>
            <person name="Kravitz S.A."/>
            <person name="Mouchard L."/>
            <person name="Reinert K."/>
            <person name="Remington K.A."/>
            <person name="Clark A.G."/>
            <person name="Waterman M.S."/>
            <person name="Eichler E.E."/>
            <person name="Adams M.D."/>
            <person name="Hunkapiller M.W."/>
            <person name="Myers E.W."/>
            <person name="Venter J.C."/>
        </authorList>
    </citation>
    <scope>NUCLEOTIDE SEQUENCE [LARGE SCALE GENOMIC DNA]</scope>
</reference>
<reference key="5">
    <citation type="journal article" date="2004" name="Genome Res.">
        <title>The status, quality, and expansion of the NIH full-length cDNA project: the Mammalian Gene Collection (MGC).</title>
        <authorList>
            <consortium name="The MGC Project Team"/>
        </authorList>
    </citation>
    <scope>NUCLEOTIDE SEQUENCE [LARGE SCALE MRNA] (ISOFORMS 2 AND 3)</scope>
    <scope>NUCLEOTIDE SEQUENCE [LARGE SCALE MRNA] OF 312-790 (ISOFORM 1)</scope>
    <source>
        <tissue>Brain</tissue>
        <tissue>Chondrosarcoma</tissue>
        <tissue>Lung</tissue>
    </source>
</reference>
<reference key="6">
    <citation type="journal article" date="2004" name="Blood">
        <title>Identification and characterization of EBP, a novel EEN binding protein that inhibits Ras signaling and is recruited into the nucleus by the MLL-EEN fusion protein.</title>
        <authorList>
            <person name="Yam J.W."/>
            <person name="Jin D.Y."/>
            <person name="So C.W."/>
            <person name="Chan L.C."/>
        </authorList>
    </citation>
    <scope>FUNCTION</scope>
    <scope>SUBCELLULAR LOCATION</scope>
    <scope>INTERACTION WITH SH3GL1 AND SOS2</scope>
</reference>
<reference key="7">
    <citation type="journal article" date="2004" name="J. Biol. Chem.">
        <title>ADAM binding protein Eve-1 is required for ectodomain shedding of epidermal growth factor receptor ligands.</title>
        <authorList>
            <person name="Tanaka M."/>
            <person name="Nanba D."/>
            <person name="Mori S."/>
            <person name="Shiba F."/>
            <person name="Ishiguro H."/>
            <person name="Yoshino K."/>
            <person name="Matsuura N."/>
            <person name="Higashiyama S."/>
        </authorList>
    </citation>
    <scope>FUNCTION</scope>
    <scope>ALTERNATIVE SPLICING (ISOFORMS 1; 2; 4 AND 5)</scope>
    <scope>TISSUE SPECIFICITY</scope>
    <scope>INTERACTION WITH ADAM9; ADAM10; ADAM12; ADAM15 AND ADAM17</scope>
</reference>
<reference key="8">
    <citation type="journal article" date="2008" name="Proc. Natl. Acad. Sci. U.S.A.">
        <title>A quantitative atlas of mitotic phosphorylation.</title>
        <authorList>
            <person name="Dephoure N."/>
            <person name="Zhou C."/>
            <person name="Villen J."/>
            <person name="Beausoleil S.A."/>
            <person name="Bakalarski C.E."/>
            <person name="Elledge S.J."/>
            <person name="Gygi S.P."/>
        </authorList>
    </citation>
    <scope>IDENTIFICATION BY MASS SPECTROMETRY [LARGE SCALE ANALYSIS]</scope>
    <source>
        <tissue>Cervix carcinoma</tissue>
    </source>
</reference>
<reference key="9">
    <citation type="journal article" date="2011" name="BMC Biol.">
        <title>Identification and characterization of a set of conserved and new regulators of cytoskeletal organisation, cell morphology and migration.</title>
        <authorList>
            <person name="Bai S.W."/>
            <person name="Herrera-Abreu M.T."/>
            <person name="Rohn J.L."/>
            <person name="Racine V."/>
            <person name="Tajadura V."/>
            <person name="Suryavanshi N."/>
            <person name="Bechtel S."/>
            <person name="Wiemann S."/>
            <person name="Baum B."/>
            <person name="Ridley A.J."/>
        </authorList>
    </citation>
    <scope>FUNCTION</scope>
</reference>
<reference key="10">
    <citation type="journal article" date="2014" name="J. Proteomics">
        <title>An enzyme assisted RP-RPLC approach for in-depth analysis of human liver phosphoproteome.</title>
        <authorList>
            <person name="Bian Y."/>
            <person name="Song C."/>
            <person name="Cheng K."/>
            <person name="Dong M."/>
            <person name="Wang F."/>
            <person name="Huang J."/>
            <person name="Sun D."/>
            <person name="Wang L."/>
            <person name="Ye M."/>
            <person name="Zou H."/>
        </authorList>
    </citation>
    <scope>PHOSPHORYLATION [LARGE SCALE ANALYSIS] AT SER-762</scope>
    <scope>IDENTIFICATION BY MASS SPECTROMETRY [LARGE SCALE ANALYSIS]</scope>
    <source>
        <tissue>Liver</tissue>
    </source>
</reference>
<organism>
    <name type="scientific">Homo sapiens</name>
    <name type="common">Human</name>
    <dbReference type="NCBI Taxonomy" id="9606"/>
    <lineage>
        <taxon>Eukaryota</taxon>
        <taxon>Metazoa</taxon>
        <taxon>Chordata</taxon>
        <taxon>Craniata</taxon>
        <taxon>Vertebrata</taxon>
        <taxon>Euteleostomi</taxon>
        <taxon>Mammalia</taxon>
        <taxon>Eutheria</taxon>
        <taxon>Euarchontoglires</taxon>
        <taxon>Primates</taxon>
        <taxon>Haplorrhini</taxon>
        <taxon>Catarrhini</taxon>
        <taxon>Hominidae</taxon>
        <taxon>Homo</taxon>
    </lineage>
</organism>
<keyword id="KW-0025">Alternative splicing</keyword>
<keyword id="KW-0963">Cytoplasm</keyword>
<keyword id="KW-0539">Nucleus</keyword>
<keyword id="KW-0597">Phosphoprotein</keyword>
<keyword id="KW-1267">Proteomics identification</keyword>
<keyword id="KW-1185">Reference proteome</keyword>
<keyword id="KW-0677">Repeat</keyword>
<keyword id="KW-0728">SH3 domain</keyword>
<name>SH319_HUMAN</name>
<gene>
    <name type="primary">SH3D19</name>
</gene>
<proteinExistence type="evidence at protein level"/>
<dbReference type="EMBL" id="AK291025">
    <property type="protein sequence ID" value="BAF83714.1"/>
    <property type="status" value="ALT_INIT"/>
    <property type="molecule type" value="mRNA"/>
</dbReference>
<dbReference type="EMBL" id="AK294476">
    <property type="protein sequence ID" value="BAH11782.1"/>
    <property type="molecule type" value="mRNA"/>
</dbReference>
<dbReference type="EMBL" id="AL133047">
    <property type="protein sequence ID" value="CAB61374.1"/>
    <property type="molecule type" value="mRNA"/>
</dbReference>
<dbReference type="EMBL" id="BX647422">
    <property type="protein sequence ID" value="CAI46052.1"/>
    <property type="status" value="ALT_INIT"/>
    <property type="molecule type" value="mRNA"/>
</dbReference>
<dbReference type="EMBL" id="AC095055">
    <property type="status" value="NOT_ANNOTATED_CDS"/>
    <property type="molecule type" value="Genomic_DNA"/>
</dbReference>
<dbReference type="EMBL" id="CH471056">
    <property type="protein sequence ID" value="EAX04986.1"/>
    <property type="molecule type" value="Genomic_DNA"/>
</dbReference>
<dbReference type="EMBL" id="BC032468">
    <property type="protein sequence ID" value="AAH32468.1"/>
    <property type="molecule type" value="mRNA"/>
</dbReference>
<dbReference type="EMBL" id="BC045742">
    <property type="protein sequence ID" value="AAH45742.1"/>
    <property type="molecule type" value="mRNA"/>
</dbReference>
<dbReference type="EMBL" id="BC085613">
    <property type="protein sequence ID" value="AAH85613.2"/>
    <property type="molecule type" value="mRNA"/>
</dbReference>
<dbReference type="EMBL" id="BC108890">
    <property type="protein sequence ID" value="AAI08891.1"/>
    <property type="status" value="ALT_INIT"/>
    <property type="molecule type" value="mRNA"/>
</dbReference>
<dbReference type="EMBL" id="BC108891">
    <property type="protein sequence ID" value="AAI08892.1"/>
    <property type="status" value="ALT_INIT"/>
    <property type="molecule type" value="mRNA"/>
</dbReference>
<dbReference type="EMBL" id="BC108892">
    <property type="protein sequence ID" value="AAI08893.1"/>
    <property type="status" value="ALT_INIT"/>
    <property type="molecule type" value="mRNA"/>
</dbReference>
<dbReference type="EMBL" id="BC108893">
    <property type="protein sequence ID" value="AAI08894.1"/>
    <property type="status" value="ALT_INIT"/>
    <property type="molecule type" value="mRNA"/>
</dbReference>
<dbReference type="CCDS" id="CCDS34077.2">
    <molecule id="Q5HYK7-1"/>
</dbReference>
<dbReference type="CCDS" id="CCDS47143.1">
    <molecule id="Q5HYK7-3"/>
</dbReference>
<dbReference type="CCDS" id="CCDS47144.1">
    <molecule id="Q5HYK7-2"/>
</dbReference>
<dbReference type="RefSeq" id="NP_001009555.3">
    <molecule id="Q5HYK7-1"/>
    <property type="nucleotide sequence ID" value="NM_001009555.4"/>
</dbReference>
<dbReference type="RefSeq" id="NP_001122395.1">
    <molecule id="Q5HYK7-2"/>
    <property type="nucleotide sequence ID" value="NM_001128923.2"/>
</dbReference>
<dbReference type="RefSeq" id="NP_001122396.1">
    <molecule id="Q5HYK7-3"/>
    <property type="nucleotide sequence ID" value="NM_001128924.2"/>
</dbReference>
<dbReference type="RefSeq" id="NP_001230278.1">
    <molecule id="Q5HYK7-2"/>
    <property type="nucleotide sequence ID" value="NM_001243349.2"/>
</dbReference>
<dbReference type="RefSeq" id="NP_001365055.1">
    <molecule id="Q5HYK7-1"/>
    <property type="nucleotide sequence ID" value="NM_001378126.1"/>
</dbReference>
<dbReference type="RefSeq" id="NP_001365056.1">
    <molecule id="Q5HYK7-1"/>
    <property type="nucleotide sequence ID" value="NM_001378127.1"/>
</dbReference>
<dbReference type="RefSeq" id="NP_001365057.1">
    <molecule id="Q5HYK7-2"/>
    <property type="nucleotide sequence ID" value="NM_001378128.1"/>
</dbReference>
<dbReference type="RefSeq" id="NP_001365058.1">
    <molecule id="Q5HYK7-2"/>
    <property type="nucleotide sequence ID" value="NM_001378129.1"/>
</dbReference>
<dbReference type="RefSeq" id="NP_001365059.1">
    <molecule id="Q5HYK7-2"/>
    <property type="nucleotide sequence ID" value="NM_001378130.1"/>
</dbReference>
<dbReference type="RefSeq" id="NP_001365060.1">
    <molecule id="Q5HYK7-2"/>
    <property type="nucleotide sequence ID" value="NM_001378131.1"/>
</dbReference>
<dbReference type="RefSeq" id="XP_005262824.1">
    <property type="nucleotide sequence ID" value="XM_005262767.2"/>
</dbReference>
<dbReference type="RefSeq" id="XP_011529948.1">
    <property type="nucleotide sequence ID" value="XM_011531646.1"/>
</dbReference>
<dbReference type="RefSeq" id="XP_011529951.1">
    <property type="nucleotide sequence ID" value="XM_011531649.1"/>
</dbReference>
<dbReference type="RefSeq" id="XP_016863268.1">
    <property type="nucleotide sequence ID" value="XM_017007779.1"/>
</dbReference>
<dbReference type="RefSeq" id="XP_016863270.1">
    <property type="nucleotide sequence ID" value="XM_017007781.1"/>
</dbReference>
<dbReference type="RefSeq" id="XP_016863271.1">
    <property type="nucleotide sequence ID" value="XM_017007782.1"/>
</dbReference>
<dbReference type="RefSeq" id="XP_016863272.1">
    <property type="nucleotide sequence ID" value="XM_017007783.1"/>
</dbReference>
<dbReference type="SMR" id="Q5HYK7"/>
<dbReference type="BioGRID" id="127448">
    <property type="interactions" value="61"/>
</dbReference>
<dbReference type="FunCoup" id="Q5HYK7">
    <property type="interactions" value="1059"/>
</dbReference>
<dbReference type="IntAct" id="Q5HYK7">
    <property type="interactions" value="27"/>
</dbReference>
<dbReference type="MINT" id="Q5HYK7"/>
<dbReference type="STRING" id="9606.ENSP00000302913"/>
<dbReference type="GlyGen" id="Q5HYK7">
    <property type="glycosylation" value="3 sites, 1 O-linked glycan (1 site)"/>
</dbReference>
<dbReference type="iPTMnet" id="Q5HYK7"/>
<dbReference type="PhosphoSitePlus" id="Q5HYK7"/>
<dbReference type="BioMuta" id="SH3D19"/>
<dbReference type="DMDM" id="166977688"/>
<dbReference type="jPOST" id="Q5HYK7"/>
<dbReference type="MassIVE" id="Q5HYK7"/>
<dbReference type="PaxDb" id="9606-ENSP00000302913"/>
<dbReference type="PeptideAtlas" id="Q5HYK7"/>
<dbReference type="ProteomicsDB" id="62944">
    <molecule id="Q5HYK7-1"/>
</dbReference>
<dbReference type="ProteomicsDB" id="62945">
    <molecule id="Q5HYK7-2"/>
</dbReference>
<dbReference type="ProteomicsDB" id="62946">
    <molecule id="Q5HYK7-3"/>
</dbReference>
<dbReference type="ProteomicsDB" id="62947">
    <molecule id="Q5HYK7-4"/>
</dbReference>
<dbReference type="ProteomicsDB" id="62948">
    <molecule id="Q5HYK7-5"/>
</dbReference>
<dbReference type="Pumba" id="Q5HYK7"/>
<dbReference type="ABCD" id="Q5HYK7">
    <property type="antibodies" value="7 sequenced antibodies"/>
</dbReference>
<dbReference type="Antibodypedia" id="2969">
    <property type="antibodies" value="100 antibodies from 19 providers"/>
</dbReference>
<dbReference type="DNASU" id="152503"/>
<dbReference type="Ensembl" id="ENST00000409252.6">
    <molecule id="Q5HYK7-1"/>
    <property type="protein sequence ID" value="ENSP00000386848.2"/>
    <property type="gene ID" value="ENSG00000109686.21"/>
</dbReference>
<dbReference type="Ensembl" id="ENST00000409598.8">
    <molecule id="Q5HYK7-2"/>
    <property type="protein sequence ID" value="ENSP00000387030.4"/>
    <property type="gene ID" value="ENSG00000109686.21"/>
</dbReference>
<dbReference type="Ensembl" id="ENST00000427414.2">
    <molecule id="Q5HYK7-3"/>
    <property type="protein sequence ID" value="ENSP00000415694.1"/>
    <property type="gene ID" value="ENSG00000109686.21"/>
</dbReference>
<dbReference type="Ensembl" id="ENST00000514152.5">
    <molecule id="Q5HYK7-2"/>
    <property type="protein sequence ID" value="ENSP00000423449.1"/>
    <property type="gene ID" value="ENSG00000109686.21"/>
</dbReference>
<dbReference type="Ensembl" id="ENST00000709914.1">
    <molecule id="Q5HYK7-2"/>
    <property type="protein sequence ID" value="ENSP00000517934.1"/>
    <property type="gene ID" value="ENSG00000292165.1"/>
</dbReference>
<dbReference type="Ensembl" id="ENST00000709915.1">
    <molecule id="Q5HYK7-1"/>
    <property type="protein sequence ID" value="ENSP00000517935.1"/>
    <property type="gene ID" value="ENSG00000292165.1"/>
</dbReference>
<dbReference type="Ensembl" id="ENST00000709917.1">
    <molecule id="Q5HYK7-2"/>
    <property type="protein sequence ID" value="ENSP00000517936.1"/>
    <property type="gene ID" value="ENSG00000292165.1"/>
</dbReference>
<dbReference type="Ensembl" id="ENST00000709920.1">
    <molecule id="Q5HYK7-3"/>
    <property type="protein sequence ID" value="ENSP00000517939.1"/>
    <property type="gene ID" value="ENSG00000292165.1"/>
</dbReference>
<dbReference type="Ensembl" id="ENST00000709926.1">
    <molecule id="Q5HYK7-1"/>
    <property type="protein sequence ID" value="ENSP00000517941.1"/>
    <property type="gene ID" value="ENSG00000292165.1"/>
</dbReference>
<dbReference type="GeneID" id="152503"/>
<dbReference type="KEGG" id="hsa:152503"/>
<dbReference type="UCSC" id="uc003imc.3">
    <molecule id="Q5HYK7-1"/>
    <property type="organism name" value="human"/>
</dbReference>
<dbReference type="AGR" id="HGNC:30418"/>
<dbReference type="CTD" id="152503"/>
<dbReference type="DisGeNET" id="152503"/>
<dbReference type="GeneCards" id="SH3D19"/>
<dbReference type="HGNC" id="HGNC:30418">
    <property type="gene designation" value="SH3D19"/>
</dbReference>
<dbReference type="HPA" id="ENSG00000109686">
    <property type="expression patterns" value="Low tissue specificity"/>
</dbReference>
<dbReference type="MIM" id="608674">
    <property type="type" value="gene"/>
</dbReference>
<dbReference type="neXtProt" id="NX_Q5HYK7"/>
<dbReference type="OpenTargets" id="ENSG00000109686"/>
<dbReference type="PharmGKB" id="PA162403244"/>
<dbReference type="VEuPathDB" id="HostDB:ENSG00000109686"/>
<dbReference type="eggNOG" id="KOG4225">
    <property type="taxonomic scope" value="Eukaryota"/>
</dbReference>
<dbReference type="GeneTree" id="ENSGT00940000155694"/>
<dbReference type="HOGENOM" id="CLU_015305_2_0_1"/>
<dbReference type="InParanoid" id="Q5HYK7"/>
<dbReference type="OMA" id="VHKSCMK"/>
<dbReference type="OrthoDB" id="27823at2759"/>
<dbReference type="PAN-GO" id="Q5HYK7">
    <property type="GO annotations" value="1 GO annotation based on evolutionary models"/>
</dbReference>
<dbReference type="PhylomeDB" id="Q5HYK7"/>
<dbReference type="TreeFam" id="TF330850"/>
<dbReference type="PathwayCommons" id="Q5HYK7"/>
<dbReference type="Reactome" id="R-HSA-432722">
    <property type="pathway name" value="Golgi Associated Vesicle Biogenesis"/>
</dbReference>
<dbReference type="SignaLink" id="Q5HYK7"/>
<dbReference type="BioGRID-ORCS" id="152503">
    <property type="hits" value="9 hits in 1156 CRISPR screens"/>
</dbReference>
<dbReference type="ChiTaRS" id="SH3D19">
    <property type="organism name" value="human"/>
</dbReference>
<dbReference type="GenomeRNAi" id="152503"/>
<dbReference type="Pharos" id="Q5HYK7">
    <property type="development level" value="Tbio"/>
</dbReference>
<dbReference type="PRO" id="PR:Q5HYK7"/>
<dbReference type="Proteomes" id="UP000005640">
    <property type="component" value="Chromosome 4"/>
</dbReference>
<dbReference type="RNAct" id="Q5HYK7">
    <property type="molecule type" value="protein"/>
</dbReference>
<dbReference type="Bgee" id="ENSG00000109686">
    <property type="expression patterns" value="Expressed in tendon of biceps brachii and 178 other cell types or tissues"/>
</dbReference>
<dbReference type="ExpressionAtlas" id="Q5HYK7">
    <property type="expression patterns" value="baseline and differential"/>
</dbReference>
<dbReference type="GO" id="GO:0005829">
    <property type="term" value="C:cytosol"/>
    <property type="evidence" value="ECO:0000314"/>
    <property type="project" value="HPA"/>
</dbReference>
<dbReference type="GO" id="GO:0005654">
    <property type="term" value="C:nucleoplasm"/>
    <property type="evidence" value="ECO:0000314"/>
    <property type="project" value="HPA"/>
</dbReference>
<dbReference type="GO" id="GO:0005886">
    <property type="term" value="C:plasma membrane"/>
    <property type="evidence" value="ECO:0000314"/>
    <property type="project" value="BHF-UCL"/>
</dbReference>
<dbReference type="GO" id="GO:0070064">
    <property type="term" value="F:proline-rich region binding"/>
    <property type="evidence" value="ECO:0000353"/>
    <property type="project" value="BHF-UCL"/>
</dbReference>
<dbReference type="GO" id="GO:0007010">
    <property type="term" value="P:cytoskeleton organization"/>
    <property type="evidence" value="ECO:0000315"/>
    <property type="project" value="UniProtKB"/>
</dbReference>
<dbReference type="GO" id="GO:0051044">
    <property type="term" value="P:positive regulation of membrane protein ectodomain proteolysis"/>
    <property type="evidence" value="ECO:0000315"/>
    <property type="project" value="BHF-UCL"/>
</dbReference>
<dbReference type="GO" id="GO:0022604">
    <property type="term" value="P:regulation of cell morphogenesis"/>
    <property type="evidence" value="ECO:0000315"/>
    <property type="project" value="UniProtKB"/>
</dbReference>
<dbReference type="CDD" id="cd11814">
    <property type="entry name" value="SH3_Eve1_1"/>
    <property type="match status" value="1"/>
</dbReference>
<dbReference type="CDD" id="cd11815">
    <property type="entry name" value="SH3_Eve1_2"/>
    <property type="match status" value="1"/>
</dbReference>
<dbReference type="CDD" id="cd11816">
    <property type="entry name" value="SH3_Eve1_3"/>
    <property type="match status" value="1"/>
</dbReference>
<dbReference type="CDD" id="cd11817">
    <property type="entry name" value="SH3_Eve1_4"/>
    <property type="match status" value="1"/>
</dbReference>
<dbReference type="CDD" id="cd11818">
    <property type="entry name" value="SH3_Eve1_5"/>
    <property type="match status" value="1"/>
</dbReference>
<dbReference type="FunFam" id="2.30.30.40:FF:000200">
    <property type="entry name" value="SH3 domain containing 19"/>
    <property type="match status" value="1"/>
</dbReference>
<dbReference type="FunFam" id="2.30.30.40:FF:000205">
    <property type="entry name" value="SH3 domain containing 19"/>
    <property type="match status" value="1"/>
</dbReference>
<dbReference type="FunFam" id="2.30.30.40:FF:000240">
    <property type="entry name" value="SH3 domain containing 19"/>
    <property type="match status" value="1"/>
</dbReference>
<dbReference type="FunFam" id="2.30.30.40:FF:000214">
    <property type="entry name" value="SH3 domain-containing protein 19 isoform X2"/>
    <property type="match status" value="1"/>
</dbReference>
<dbReference type="Gene3D" id="2.30.30.40">
    <property type="entry name" value="SH3 Domains"/>
    <property type="match status" value="4"/>
</dbReference>
<dbReference type="InterPro" id="IPR050384">
    <property type="entry name" value="Endophilin_SH3RF"/>
</dbReference>
<dbReference type="InterPro" id="IPR035834">
    <property type="entry name" value="Eve1_SH3_1"/>
</dbReference>
<dbReference type="InterPro" id="IPR035835">
    <property type="entry name" value="Eve1_SH3_3"/>
</dbReference>
<dbReference type="InterPro" id="IPR036028">
    <property type="entry name" value="SH3-like_dom_sf"/>
</dbReference>
<dbReference type="InterPro" id="IPR001452">
    <property type="entry name" value="SH3_domain"/>
</dbReference>
<dbReference type="PANTHER" id="PTHR14167">
    <property type="entry name" value="SH3 DOMAIN-CONTAINING"/>
    <property type="match status" value="1"/>
</dbReference>
<dbReference type="PANTHER" id="PTHR14167:SF48">
    <property type="entry name" value="SH3 DOMAIN-CONTAINING PROTEIN 19"/>
    <property type="match status" value="1"/>
</dbReference>
<dbReference type="Pfam" id="PF00018">
    <property type="entry name" value="SH3_1"/>
    <property type="match status" value="3"/>
</dbReference>
<dbReference type="Pfam" id="PF07653">
    <property type="entry name" value="SH3_2"/>
    <property type="match status" value="1"/>
</dbReference>
<dbReference type="Pfam" id="PF14604">
    <property type="entry name" value="SH3_9"/>
    <property type="match status" value="1"/>
</dbReference>
<dbReference type="PRINTS" id="PR00499">
    <property type="entry name" value="P67PHOX"/>
</dbReference>
<dbReference type="PRINTS" id="PR00452">
    <property type="entry name" value="SH3DOMAIN"/>
</dbReference>
<dbReference type="SMART" id="SM00326">
    <property type="entry name" value="SH3"/>
    <property type="match status" value="5"/>
</dbReference>
<dbReference type="SUPFAM" id="SSF50044">
    <property type="entry name" value="SH3-domain"/>
    <property type="match status" value="5"/>
</dbReference>
<dbReference type="PROSITE" id="PS50002">
    <property type="entry name" value="SH3"/>
    <property type="match status" value="5"/>
</dbReference>
<sequence>MNIMNTEQSQNSIVSRIKVFEGQTNIETSGLPKKPEITPRSLPPKPTVSSGKPSVAPKPAANRASGEWDSGTENRLKVTSKEGLTPYPPLQEAGSIPVTKPELPKKPNPGLIRSVNPEIPGRGPLAESSDSGKKVPTPAPRPLLLKKSVSSENPTYPSAPLKPVTVPPRLAGASQAKAYKSLGEGPPANPPVPVLQSKPLVDIDLISFDDDVLPTPSGNLAEESVGSEMVLDPFQLPAKTEPIKERAVQPAPTRKPTVIRIPAKPGKCLHEDPQSPPPLPAEKPIGNTFSTVSGKLSNVERTRNLESNHPGQTGGFVRVPPRLPPRPVNGKTIPTQQPPTKVPPERPPPPKLSATRRSNKKLPFNRSSSDMDLQKKQSNLATGLSKAKSQVFKNQDPVLPPRPKPGHPLYSKYMLSVPHGIANEDIVSQNPGELSCKRGDVLVMLKQTENNYLECQKGEDTGRVHLSQMKIITPLDEHLRSRPNDPSHAQKPVDSGAPHAVVLHDFPAEQVDDLNLTSGEIVYLLEKIDTDWYRGNCRNQIGIFPANYVKVIIDIPEGGNGKRECVSSHCVKGSRCVARFEYIGEQKDELSFSEGEIIILKEYVNEEWARGEVRGRTGIFPLNFVEPVEDYPTSGANVLSTKVPLKTKKEDSGSNSQVNSLPAEWCEALHSFTAETSDDLSFKRGDRIQILERLDSDWCRGRLQDREGIFPAVFVRPCPAEAKSMLAIVPKGRKAKALYDFRGENEDELSFKAGDIITELESVDDDWMSGELMGKSGIFPKNYIQFLQIS</sequence>
<comment type="function">
    <text evidence="5 6 7">May play a role in regulating A disintegrin and metalloproteases (ADAMs) in the signaling of EGFR-ligand shedding. May be involved in suppression of Ras-induced cellular transformation and Ras-mediated activation of ELK1. Plays a role in the regulation of cell morphology and cytoskeletal organization.</text>
</comment>
<comment type="subunit">
    <text evidence="1">Interacts with ADAM12. Isoform 4 and isoform 5 (but not isoform 1 and isoform 2) interact with ADAM9, ADAM10, ADAM15 and ADAM17. Interacts with SH3GL1 SH3 domain. Interacts via SH3 3 and SH3 4 or SH3 4 and SH3 5 domains with SOS2. Probably forms a trimeric complex with SH3GL1 and SOS2. Interacts with SH3YL1 (By similarity).</text>
</comment>
<comment type="interaction">
    <interactant intactId="EBI-2563437">
        <id>Q5HYK7</id>
    </interactant>
    <interactant intactId="EBI-722667">
        <id>Q96HL8</id>
        <label>SH3YL1</label>
    </interactant>
    <organismsDiffer>false</organismsDiffer>
    <experiments>4</experiments>
</comment>
<comment type="interaction">
    <interactant intactId="EBI-14699032">
        <id>Q5HYK7-2</id>
    </interactant>
    <interactant intactId="EBI-722667">
        <id>Q96HL8</id>
        <label>SH3YL1</label>
    </interactant>
    <organismsDiffer>false</organismsDiffer>
    <experiments>7</experiments>
</comment>
<comment type="subcellular location">
    <subcellularLocation>
        <location evidence="5">Cytoplasm</location>
    </subcellularLocation>
    <subcellularLocation>
        <location evidence="5">Nucleus</location>
    </subcellularLocation>
    <text>Is recruited to the nucleus by the KMT2A/MLL1-EEN fusion protein.</text>
</comment>
<comment type="alternative products">
    <event type="alternative splicing"/>
    <isoform>
        <id>Q5HYK7-1</id>
        <name>1</name>
        <name>Eve-1a</name>
        <sequence type="displayed"/>
    </isoform>
    <isoform>
        <id>Q5HYK7-2</id>
        <name>2</name>
        <name>Eve-1b</name>
        <sequence type="described" ref="VSP_031184"/>
    </isoform>
    <isoform>
        <id>Q5HYK7-3</id>
        <name>3</name>
        <sequence type="described" ref="VSP_031183 VSP_031184"/>
    </isoform>
    <isoform>
        <id>Q5HYK7-4</id>
        <name>4</name>
        <name>Eve-1c</name>
        <sequence type="described" ref="VSP_031182"/>
    </isoform>
    <isoform>
        <id>Q5HYK7-5</id>
        <name>5</name>
        <name>Eve-1d</name>
        <sequence type="described" ref="VSP_031182 VSP_031184"/>
    </isoform>
</comment>
<comment type="tissue specificity">
    <text evidence="6">Widely expressed with highest levels in heart, skeletal muscle, kidney, liver, placenta, small intestine and lung. Expressed at low levels in colon, thymus, spleen and leukocytes.</text>
</comment>
<comment type="caution">
    <text evidence="10">It is uncertain whether Met-1 or Met-4 is the initiator.</text>
</comment>
<comment type="sequence caution" evidence="10">
    <conflict type="erroneous initiation">
        <sequence resource="EMBL-CDS" id="AAI08891"/>
    </conflict>
</comment>
<comment type="sequence caution" evidence="10">
    <conflict type="erroneous initiation">
        <sequence resource="EMBL-CDS" id="AAI08892"/>
    </conflict>
</comment>
<comment type="sequence caution" evidence="10">
    <conflict type="erroneous initiation">
        <sequence resource="EMBL-CDS" id="AAI08893"/>
    </conflict>
</comment>
<comment type="sequence caution" evidence="10">
    <conflict type="erroneous initiation">
        <sequence resource="EMBL-CDS" id="AAI08894"/>
    </conflict>
</comment>
<comment type="sequence caution" evidence="10">
    <conflict type="erroneous initiation">
        <sequence resource="EMBL-CDS" id="BAF83714"/>
    </conflict>
</comment>
<comment type="sequence caution" evidence="10">
    <conflict type="erroneous initiation">
        <sequence resource="EMBL-CDS" id="CAI46052"/>
    </conflict>
</comment>
<accession>Q5HYK7</accession>
<accession>B7Z296</accession>
<accession>Q08EK1</accession>
<accession>Q32N10</accession>
<accession>Q5U3B8</accession>
<accession>Q86XB3</accession>
<accession>Q8N5E7</accession>
<accession>Q9UFC8</accession>